<gene>
    <name type="primary">pucA</name>
    <name type="ordered locus">RHOS4_19220</name>
    <name type="ORF">RSP_6256</name>
</gene>
<name>LHA2_CERS4</name>
<proteinExistence type="evidence at protein level"/>
<comment type="function">
    <text>Antenna complexes are light-harvesting systems, which transfer the excitation energy to the reaction centers.</text>
</comment>
<comment type="subunit">
    <text>The core complex is formed by different alpha and beta chains, binding bacteriochlorophyll molecules, and arranged most probably in tetrameric structures disposed around the reaction center. The non-pigmented gamma chains may constitute additional components.</text>
</comment>
<comment type="subcellular location">
    <subcellularLocation>
        <location>Cell inner membrane</location>
        <topology>Single-pass type II membrane protein</topology>
    </subcellularLocation>
</comment>
<comment type="similarity">
    <text evidence="2">Belongs to the antenna complex alpha subunit family.</text>
</comment>
<keyword id="KW-0002">3D-structure</keyword>
<keyword id="KW-0042">Antenna complex</keyword>
<keyword id="KW-0076">Bacteriochlorophyll</keyword>
<keyword id="KW-0997">Cell inner membrane</keyword>
<keyword id="KW-1003">Cell membrane</keyword>
<keyword id="KW-0148">Chlorophyll</keyword>
<keyword id="KW-0157">Chromophore</keyword>
<keyword id="KW-0437">Light-harvesting polypeptide</keyword>
<keyword id="KW-0460">Magnesium</keyword>
<keyword id="KW-0472">Membrane</keyword>
<keyword id="KW-0479">Metal-binding</keyword>
<keyword id="KW-1185">Reference proteome</keyword>
<keyword id="KW-0812">Transmembrane</keyword>
<keyword id="KW-1133">Transmembrane helix</keyword>
<organism>
    <name type="scientific">Cereibacter sphaeroides (strain ATCC 17023 / DSM 158 / JCM 6121 / CCUG 31486 / LMG 2827 / NBRC 12203 / NCIMB 8253 / ATH 2.4.1.)</name>
    <name type="common">Rhodobacter sphaeroides</name>
    <dbReference type="NCBI Taxonomy" id="272943"/>
    <lineage>
        <taxon>Bacteria</taxon>
        <taxon>Pseudomonadati</taxon>
        <taxon>Pseudomonadota</taxon>
        <taxon>Alphaproteobacteria</taxon>
        <taxon>Rhodobacterales</taxon>
        <taxon>Paracoccaceae</taxon>
        <taxon>Cereibacter</taxon>
    </lineage>
</organism>
<accession>Q3J144</accession>
<accession>P02946</accession>
<evidence type="ECO:0000255" key="1"/>
<evidence type="ECO:0000305" key="2"/>
<feature type="chain" id="PRO_0000099804" description="Light-harvesting protein B-800/850 alpha chain">
    <location>
        <begin position="1"/>
        <end position="54"/>
    </location>
</feature>
<feature type="topological domain" description="Cytoplasmic" evidence="1">
    <location>
        <begin position="1"/>
        <end position="14"/>
    </location>
</feature>
<feature type="transmembrane region" description="Helical" evidence="1">
    <location>
        <begin position="15"/>
        <end position="35"/>
    </location>
</feature>
<feature type="topological domain" description="Periplasmic" evidence="1">
    <location>
        <begin position="36"/>
        <end position="54"/>
    </location>
</feature>
<feature type="binding site" description="axial binding residue" evidence="1">
    <location>
        <position position="31"/>
    </location>
    <ligand>
        <name>a bacteriochlorophyll</name>
        <dbReference type="ChEBI" id="CHEBI:38201"/>
    </ligand>
    <ligandPart>
        <name>Mg</name>
        <dbReference type="ChEBI" id="CHEBI:25107"/>
    </ligandPart>
</feature>
<protein>
    <recommendedName>
        <fullName>Light-harvesting protein B-800/850 alpha chain</fullName>
    </recommendedName>
    <alternativeName>
        <fullName>Antenna pigment protein alpha chain</fullName>
    </alternativeName>
    <alternativeName>
        <fullName>LH-2</fullName>
    </alternativeName>
</protein>
<dbReference type="EMBL" id="M16777">
    <property type="protein sequence ID" value="AAA26160.1"/>
    <property type="molecule type" value="Genomic_DNA"/>
</dbReference>
<dbReference type="EMBL" id="X68796">
    <property type="protein sequence ID" value="CAA48700.1"/>
    <property type="molecule type" value="Genomic_DNA"/>
</dbReference>
<dbReference type="EMBL" id="AF195122">
    <property type="protein sequence ID" value="AAF24246.1"/>
    <property type="molecule type" value="Genomic_DNA"/>
</dbReference>
<dbReference type="EMBL" id="CP000143">
    <property type="protein sequence ID" value="ABA79490.1"/>
    <property type="molecule type" value="Genomic_DNA"/>
</dbReference>
<dbReference type="PIR" id="A27087">
    <property type="entry name" value="A27087"/>
</dbReference>
<dbReference type="RefSeq" id="WP_002720480.1">
    <property type="nucleotide sequence ID" value="NZ_CP030271.1"/>
</dbReference>
<dbReference type="RefSeq" id="YP_353391.1">
    <property type="nucleotide sequence ID" value="NC_007493.2"/>
</dbReference>
<dbReference type="PDB" id="7PBW">
    <property type="method" value="EM"/>
    <property type="resolution" value="2.10 A"/>
    <property type="chains" value="AA/AB/AC/AD/AE/AF/AG/AH/AI=1-50"/>
</dbReference>
<dbReference type="PDBsum" id="7PBW"/>
<dbReference type="EMDB" id="EMD-13307"/>
<dbReference type="SMR" id="Q3J144"/>
<dbReference type="STRING" id="272943.RSP_6256"/>
<dbReference type="EnsemblBacteria" id="ABA79490">
    <property type="protein sequence ID" value="ABA79490"/>
    <property type="gene ID" value="RSP_6256"/>
</dbReference>
<dbReference type="KEGG" id="rsp:RSP_6256"/>
<dbReference type="PATRIC" id="fig|272943.9.peg.2261"/>
<dbReference type="eggNOG" id="ENOG503358U">
    <property type="taxonomic scope" value="Bacteria"/>
</dbReference>
<dbReference type="PhylomeDB" id="Q3J144"/>
<dbReference type="Proteomes" id="UP000002703">
    <property type="component" value="Chromosome 1"/>
</dbReference>
<dbReference type="GO" id="GO:0019866">
    <property type="term" value="C:organelle inner membrane"/>
    <property type="evidence" value="ECO:0007669"/>
    <property type="project" value="InterPro"/>
</dbReference>
<dbReference type="GO" id="GO:0005886">
    <property type="term" value="C:plasma membrane"/>
    <property type="evidence" value="ECO:0007669"/>
    <property type="project" value="UniProtKB-SubCell"/>
</dbReference>
<dbReference type="GO" id="GO:0030077">
    <property type="term" value="C:plasma membrane light-harvesting complex"/>
    <property type="evidence" value="ECO:0007669"/>
    <property type="project" value="InterPro"/>
</dbReference>
<dbReference type="GO" id="GO:0042314">
    <property type="term" value="F:bacteriochlorophyll binding"/>
    <property type="evidence" value="ECO:0007669"/>
    <property type="project" value="UniProtKB-KW"/>
</dbReference>
<dbReference type="GO" id="GO:0045156">
    <property type="term" value="F:electron transporter, transferring electrons within the cyclic electron transport pathway of photosynthesis activity"/>
    <property type="evidence" value="ECO:0007669"/>
    <property type="project" value="InterPro"/>
</dbReference>
<dbReference type="GO" id="GO:0046872">
    <property type="term" value="F:metal ion binding"/>
    <property type="evidence" value="ECO:0007669"/>
    <property type="project" value="UniProtKB-KW"/>
</dbReference>
<dbReference type="GO" id="GO:0019684">
    <property type="term" value="P:photosynthesis, light reaction"/>
    <property type="evidence" value="ECO:0007669"/>
    <property type="project" value="InterPro"/>
</dbReference>
<dbReference type="Gene3D" id="4.10.220.20">
    <property type="entry name" value="Light-harvesting complex"/>
    <property type="match status" value="1"/>
</dbReference>
<dbReference type="InterPro" id="IPR000066">
    <property type="entry name" value="Antenna_a/b"/>
</dbReference>
<dbReference type="InterPro" id="IPR018332">
    <property type="entry name" value="Antenna_alpha"/>
</dbReference>
<dbReference type="InterPro" id="IPR002361">
    <property type="entry name" value="Antenna_alpha_CS"/>
</dbReference>
<dbReference type="InterPro" id="IPR035889">
    <property type="entry name" value="Light-harvesting_complex"/>
</dbReference>
<dbReference type="Pfam" id="PF00556">
    <property type="entry name" value="LHC"/>
    <property type="match status" value="1"/>
</dbReference>
<dbReference type="PRINTS" id="PR00673">
    <property type="entry name" value="LIGHTHARVSTA"/>
</dbReference>
<dbReference type="SUPFAM" id="SSF56918">
    <property type="entry name" value="Light-harvesting complex subunits"/>
    <property type="match status" value="1"/>
</dbReference>
<dbReference type="PROSITE" id="PS00968">
    <property type="entry name" value="ANTENNA_COMP_ALPHA"/>
    <property type="match status" value="1"/>
</dbReference>
<reference key="1">
    <citation type="journal article" date="1987" name="J. Bacteriol.">
        <title>Cloning, DNA sequence, and expression of the Rhodobacter sphaeroides light-harvesting B800-850-alpha and B800-850-beta genes.</title>
        <authorList>
            <person name="Kiley P.J."/>
            <person name="Kaplan S."/>
        </authorList>
    </citation>
    <scope>NUCLEOTIDE SEQUENCE [GENOMIC DNA]</scope>
</reference>
<reference key="2">
    <citation type="journal article" date="1992" name="Mol. Microbiol.">
        <title>A putative anaerobic coproporphyrinogen III oxidase in Rhodobacter sphaeroides. II. Analysis of a region of the genome encoding hemF and the puc operon.</title>
        <authorList>
            <person name="Gibson L.C."/>
            <person name="McGlynn P."/>
            <person name="Chaudhri M."/>
            <person name="Hunter C.N."/>
        </authorList>
    </citation>
    <scope>NUCLEOTIDE SEQUENCE [GENOMIC DNA]</scope>
</reference>
<reference key="3">
    <citation type="journal article" date="2000" name="Nucleic Acids Res.">
        <title>DNA sequence analysis of the photosynthesis region of Rhodobacter sphaeroides 2.4.1.</title>
        <authorList>
            <person name="Choudhary M."/>
            <person name="Kaplan S."/>
        </authorList>
    </citation>
    <scope>NUCLEOTIDE SEQUENCE [GENOMIC DNA]</scope>
</reference>
<reference key="4">
    <citation type="submission" date="2005-09" db="EMBL/GenBank/DDBJ databases">
        <title>Complete sequence of chromosome 1 of Rhodobacter sphaeroides 2.4.1.</title>
        <authorList>
            <person name="Copeland A."/>
            <person name="Lucas S."/>
            <person name="Lapidus A."/>
            <person name="Barry K."/>
            <person name="Detter J.C."/>
            <person name="Glavina T."/>
            <person name="Hammon N."/>
            <person name="Israni S."/>
            <person name="Pitluck S."/>
            <person name="Richardson P."/>
            <person name="Mackenzie C."/>
            <person name="Choudhary M."/>
            <person name="Larimer F."/>
            <person name="Hauser L.J."/>
            <person name="Land M."/>
            <person name="Donohue T.J."/>
            <person name="Kaplan S."/>
        </authorList>
    </citation>
    <scope>NUCLEOTIDE SEQUENCE [LARGE SCALE GENOMIC DNA]</scope>
    <source>
        <strain>ATCC 17023 / DSM 158 / JCM 6121 / CCUG 31486 / LMG 2827 / NBRC 12203 / NCIMB 8253 / ATH 2.4.1.</strain>
    </source>
</reference>
<sequence>MTNGKIWLVVKPTVGVPLFLSAAVIASVVIHAAVLTTTTWLPAYYQGSAAVAAE</sequence>